<gene>
    <name evidence="1" type="primary">lnt</name>
    <name type="ordered locus">CV_4154</name>
</gene>
<accession>Q7NQI3</accession>
<reference key="1">
    <citation type="journal article" date="2003" name="Proc. Natl. Acad. Sci. U.S.A.">
        <title>The complete genome sequence of Chromobacterium violaceum reveals remarkable and exploitable bacterial adaptability.</title>
        <authorList>
            <person name="Vasconcelos A.T.R."/>
            <person name="de Almeida D.F."/>
            <person name="Hungria M."/>
            <person name="Guimaraes C.T."/>
            <person name="Antonio R.V."/>
            <person name="Almeida F.C."/>
            <person name="de Almeida L.G.P."/>
            <person name="de Almeida R."/>
            <person name="Alves-Gomes J.A."/>
            <person name="Andrade E.M."/>
            <person name="Araripe J."/>
            <person name="de Araujo M.F.F."/>
            <person name="Astolfi-Filho S."/>
            <person name="Azevedo V."/>
            <person name="Baptista A.J."/>
            <person name="Bataus L.A.M."/>
            <person name="Batista J.S."/>
            <person name="Belo A."/>
            <person name="van den Berg C."/>
            <person name="Bogo M."/>
            <person name="Bonatto S."/>
            <person name="Bordignon J."/>
            <person name="Brigido M.M."/>
            <person name="Brito C.A."/>
            <person name="Brocchi M."/>
            <person name="Burity H.A."/>
            <person name="Camargo A.A."/>
            <person name="Cardoso D.D.P."/>
            <person name="Carneiro N.P."/>
            <person name="Carraro D.M."/>
            <person name="Carvalho C.M.B."/>
            <person name="Cascardo J.C.M."/>
            <person name="Cavada B.S."/>
            <person name="Chueire L.M.O."/>
            <person name="Creczynski-Pasa T.B."/>
            <person name="Cunha-Junior N.C."/>
            <person name="Fagundes N."/>
            <person name="Falcao C.L."/>
            <person name="Fantinatti F."/>
            <person name="Farias I.P."/>
            <person name="Felipe M.S.S."/>
            <person name="Ferrari L.P."/>
            <person name="Ferro J.A."/>
            <person name="Ferro M.I.T."/>
            <person name="Franco G.R."/>
            <person name="Freitas N.S.A."/>
            <person name="Furlan L.R."/>
            <person name="Gazzinelli R.T."/>
            <person name="Gomes E.A."/>
            <person name="Goncalves P.R."/>
            <person name="Grangeiro T.B."/>
            <person name="Grattapaglia D."/>
            <person name="Grisard E.C."/>
            <person name="Hanna E.S."/>
            <person name="Jardim S.N."/>
            <person name="Laurino J."/>
            <person name="Leoi L.C.T."/>
            <person name="Lima L.F.A."/>
            <person name="Loureiro M.F."/>
            <person name="Lyra M.C.C.P."/>
            <person name="Madeira H.M.F."/>
            <person name="Manfio G.P."/>
            <person name="Maranhao A.Q."/>
            <person name="Martins W.S."/>
            <person name="di Mauro S.M.Z."/>
            <person name="de Medeiros S.R.B."/>
            <person name="Meissner R.V."/>
            <person name="Moreira M.A.M."/>
            <person name="Nascimento F.F."/>
            <person name="Nicolas M.F."/>
            <person name="Oliveira J.G."/>
            <person name="Oliveira S.C."/>
            <person name="Paixao R.F.C."/>
            <person name="Parente J.A."/>
            <person name="Pedrosa F.O."/>
            <person name="Pena S.D.J."/>
            <person name="Pereira J.O."/>
            <person name="Pereira M."/>
            <person name="Pinto L.S.R.C."/>
            <person name="Pinto L.S."/>
            <person name="Porto J.I.R."/>
            <person name="Potrich D.P."/>
            <person name="Ramalho-Neto C.E."/>
            <person name="Reis A.M.M."/>
            <person name="Rigo L.U."/>
            <person name="Rondinelli E."/>
            <person name="Santos E.B.P."/>
            <person name="Santos F.R."/>
            <person name="Schneider M.P.C."/>
            <person name="Seuanez H.N."/>
            <person name="Silva A.M.R."/>
            <person name="da Silva A.L.C."/>
            <person name="Silva D.W."/>
            <person name="Silva R."/>
            <person name="Simoes I.C."/>
            <person name="Simon D."/>
            <person name="Soares C.M.A."/>
            <person name="Soares R.B.A."/>
            <person name="Souza E.M."/>
            <person name="Souza K.R.L."/>
            <person name="Souza R.C."/>
            <person name="Steffens M.B.R."/>
            <person name="Steindel M."/>
            <person name="Teixeira S.R."/>
            <person name="Urmenyi T."/>
            <person name="Vettore A."/>
            <person name="Wassem R."/>
            <person name="Zaha A."/>
            <person name="Simpson A.J.G."/>
        </authorList>
    </citation>
    <scope>NUCLEOTIDE SEQUENCE [LARGE SCALE GENOMIC DNA]</scope>
    <source>
        <strain>ATCC 12472 / DSM 30191 / JCM 1249 / CCUG 213 / NBRC 12614 / NCIMB 9131 / NCTC 9757 / MK</strain>
    </source>
</reference>
<evidence type="ECO:0000255" key="1">
    <source>
        <dbReference type="HAMAP-Rule" id="MF_01148"/>
    </source>
</evidence>
<sequence length="516" mass="55968">MLNAAGGAGCDPSSPTATSPMRILILLLAAALAGAFTLFAFAPYRLFWLMPLCLAALVELLQREPRRAFWLGYAWGLGAYVSNFRWIYDSLHDVAGLPAWIAAPLVLLLPAYLALYPGLASWLACRIDPRPGVRWLLAFPAAWELGEWLRGWVMTGFPWGAAGYSQITESPLAGYAPLGGIHLVNYLVALSAAALAMLARAGMRQRIGILIAAALAWGSGVWLRDIEWTTPAGKPITVALAQGNIAQELKWSPENLENSLLTYYRQVAMTRADLMILPETALPLFLDDLPSGYLSMMRGEASRAGMALASGIPRRTDDGRGYLNSVVALSDPKMPYYAKDHLVPFGEFVPLPGLIGWIYQHMDMPLSGFTRGGADQPPLTLAGQKVAFNVCYEDSFGEELIGPASRAGMLANVSNLAWFGKSEAMSQHLQLSQARSLETGRYMLRATNNGMTAIIRPDGEISAVAAPFTAQVLTGFAQSRQGLTPYMRFGNLPVVLGCGALLLLALLLGWRRRGQH</sequence>
<protein>
    <recommendedName>
        <fullName evidence="1">Apolipoprotein N-acyltransferase</fullName>
        <shortName evidence="1">ALP N-acyltransferase</shortName>
        <ecNumber evidence="1">2.3.1.269</ecNumber>
    </recommendedName>
</protein>
<keyword id="KW-0012">Acyltransferase</keyword>
<keyword id="KW-0997">Cell inner membrane</keyword>
<keyword id="KW-1003">Cell membrane</keyword>
<keyword id="KW-0472">Membrane</keyword>
<keyword id="KW-1185">Reference proteome</keyword>
<keyword id="KW-0808">Transferase</keyword>
<keyword id="KW-0812">Transmembrane</keyword>
<keyword id="KW-1133">Transmembrane helix</keyword>
<name>LNT_CHRVO</name>
<organism>
    <name type="scientific">Chromobacterium violaceum (strain ATCC 12472 / DSM 30191 / JCM 1249 / CCUG 213 / NBRC 12614 / NCIMB 9131 / NCTC 9757 / MK)</name>
    <dbReference type="NCBI Taxonomy" id="243365"/>
    <lineage>
        <taxon>Bacteria</taxon>
        <taxon>Pseudomonadati</taxon>
        <taxon>Pseudomonadota</taxon>
        <taxon>Betaproteobacteria</taxon>
        <taxon>Neisseriales</taxon>
        <taxon>Chromobacteriaceae</taxon>
        <taxon>Chromobacterium</taxon>
    </lineage>
</organism>
<comment type="function">
    <text evidence="1">Catalyzes the phospholipid dependent N-acylation of the N-terminal cysteine of apolipoprotein, the last step in lipoprotein maturation.</text>
</comment>
<comment type="catalytic activity">
    <reaction evidence="1">
        <text>N-terminal S-1,2-diacyl-sn-glyceryl-L-cysteinyl-[lipoprotein] + a glycerophospholipid = N-acyl-S-1,2-diacyl-sn-glyceryl-L-cysteinyl-[lipoprotein] + a 2-acyl-sn-glycero-3-phospholipid + H(+)</text>
        <dbReference type="Rhea" id="RHEA:48228"/>
        <dbReference type="Rhea" id="RHEA-COMP:14681"/>
        <dbReference type="Rhea" id="RHEA-COMP:14684"/>
        <dbReference type="ChEBI" id="CHEBI:15378"/>
        <dbReference type="ChEBI" id="CHEBI:136912"/>
        <dbReference type="ChEBI" id="CHEBI:140656"/>
        <dbReference type="ChEBI" id="CHEBI:140657"/>
        <dbReference type="ChEBI" id="CHEBI:140660"/>
        <dbReference type="EC" id="2.3.1.269"/>
    </reaction>
</comment>
<comment type="pathway">
    <text evidence="1">Protein modification; lipoprotein biosynthesis (N-acyl transfer).</text>
</comment>
<comment type="subcellular location">
    <subcellularLocation>
        <location evidence="1">Cell inner membrane</location>
        <topology evidence="1">Multi-pass membrane protein</topology>
    </subcellularLocation>
</comment>
<comment type="similarity">
    <text evidence="1">Belongs to the CN hydrolase family. Apolipoprotein N-acyltransferase subfamily.</text>
</comment>
<feature type="chain" id="PRO_0000178060" description="Apolipoprotein N-acyltransferase">
    <location>
        <begin position="1"/>
        <end position="516"/>
    </location>
</feature>
<feature type="transmembrane region" description="Helical" evidence="1">
    <location>
        <begin position="23"/>
        <end position="43"/>
    </location>
</feature>
<feature type="transmembrane region" description="Helical" evidence="1">
    <location>
        <begin position="68"/>
        <end position="88"/>
    </location>
</feature>
<feature type="transmembrane region" description="Helical" evidence="1">
    <location>
        <begin position="94"/>
        <end position="114"/>
    </location>
</feature>
<feature type="transmembrane region" description="Helical" evidence="1">
    <location>
        <begin position="135"/>
        <end position="155"/>
    </location>
</feature>
<feature type="transmembrane region" description="Helical" evidence="1">
    <location>
        <begin position="178"/>
        <end position="198"/>
    </location>
</feature>
<feature type="transmembrane region" description="Helical" evidence="1">
    <location>
        <begin position="489"/>
        <end position="509"/>
    </location>
</feature>
<feature type="domain" description="CN hydrolase" evidence="1">
    <location>
        <begin position="241"/>
        <end position="481"/>
    </location>
</feature>
<feature type="active site" description="Proton acceptor" evidence="1">
    <location>
        <position position="279"/>
    </location>
</feature>
<feature type="active site" evidence="1">
    <location>
        <position position="339"/>
    </location>
</feature>
<feature type="active site" description="Nucleophile" evidence="1">
    <location>
        <position position="391"/>
    </location>
</feature>
<proteinExistence type="inferred from homology"/>
<dbReference type="EC" id="2.3.1.269" evidence="1"/>
<dbReference type="EMBL" id="AE016825">
    <property type="protein sequence ID" value="AAQ61815.1"/>
    <property type="molecule type" value="Genomic_DNA"/>
</dbReference>
<dbReference type="SMR" id="Q7NQI3"/>
<dbReference type="STRING" id="243365.CV_4154"/>
<dbReference type="KEGG" id="cvi:CV_4154"/>
<dbReference type="eggNOG" id="COG0815">
    <property type="taxonomic scope" value="Bacteria"/>
</dbReference>
<dbReference type="HOGENOM" id="CLU_019563_3_0_4"/>
<dbReference type="OrthoDB" id="9804277at2"/>
<dbReference type="UniPathway" id="UPA00666"/>
<dbReference type="Proteomes" id="UP000001424">
    <property type="component" value="Chromosome"/>
</dbReference>
<dbReference type="GO" id="GO:0005886">
    <property type="term" value="C:plasma membrane"/>
    <property type="evidence" value="ECO:0007669"/>
    <property type="project" value="UniProtKB-SubCell"/>
</dbReference>
<dbReference type="GO" id="GO:0016410">
    <property type="term" value="F:N-acyltransferase activity"/>
    <property type="evidence" value="ECO:0007669"/>
    <property type="project" value="UniProtKB-UniRule"/>
</dbReference>
<dbReference type="GO" id="GO:0042158">
    <property type="term" value="P:lipoprotein biosynthetic process"/>
    <property type="evidence" value="ECO:0007669"/>
    <property type="project" value="UniProtKB-UniRule"/>
</dbReference>
<dbReference type="CDD" id="cd07571">
    <property type="entry name" value="ALP_N-acyl_transferase"/>
    <property type="match status" value="1"/>
</dbReference>
<dbReference type="Gene3D" id="3.60.110.10">
    <property type="entry name" value="Carbon-nitrogen hydrolase"/>
    <property type="match status" value="1"/>
</dbReference>
<dbReference type="HAMAP" id="MF_01148">
    <property type="entry name" value="Lnt"/>
    <property type="match status" value="1"/>
</dbReference>
<dbReference type="InterPro" id="IPR004563">
    <property type="entry name" value="Apolipo_AcylTrfase"/>
</dbReference>
<dbReference type="InterPro" id="IPR003010">
    <property type="entry name" value="C-N_Hydrolase"/>
</dbReference>
<dbReference type="InterPro" id="IPR036526">
    <property type="entry name" value="C-N_Hydrolase_sf"/>
</dbReference>
<dbReference type="InterPro" id="IPR045378">
    <property type="entry name" value="LNT_N"/>
</dbReference>
<dbReference type="NCBIfam" id="TIGR00546">
    <property type="entry name" value="lnt"/>
    <property type="match status" value="1"/>
</dbReference>
<dbReference type="PANTHER" id="PTHR38686">
    <property type="entry name" value="APOLIPOPROTEIN N-ACYLTRANSFERASE"/>
    <property type="match status" value="1"/>
</dbReference>
<dbReference type="PANTHER" id="PTHR38686:SF1">
    <property type="entry name" value="APOLIPOPROTEIN N-ACYLTRANSFERASE"/>
    <property type="match status" value="1"/>
</dbReference>
<dbReference type="Pfam" id="PF00795">
    <property type="entry name" value="CN_hydrolase"/>
    <property type="match status" value="1"/>
</dbReference>
<dbReference type="Pfam" id="PF20154">
    <property type="entry name" value="LNT_N"/>
    <property type="match status" value="1"/>
</dbReference>
<dbReference type="SUPFAM" id="SSF56317">
    <property type="entry name" value="Carbon-nitrogen hydrolase"/>
    <property type="match status" value="1"/>
</dbReference>
<dbReference type="PROSITE" id="PS50263">
    <property type="entry name" value="CN_HYDROLASE"/>
    <property type="match status" value="1"/>
</dbReference>